<comment type="function">
    <text evidence="1">Catalyzes the complicated ring closure reaction between the two acyclic compounds 1-deoxy-D-xylulose-5-phosphate (DXP) and 3-amino-2-oxopropyl phosphate (1-amino-acetone-3-phosphate or AAP) to form pyridoxine 5'-phosphate (PNP) and inorganic phosphate.</text>
</comment>
<comment type="catalytic activity">
    <reaction evidence="1">
        <text>3-amino-2-oxopropyl phosphate + 1-deoxy-D-xylulose 5-phosphate = pyridoxine 5'-phosphate + phosphate + 2 H2O + H(+)</text>
        <dbReference type="Rhea" id="RHEA:15265"/>
        <dbReference type="ChEBI" id="CHEBI:15377"/>
        <dbReference type="ChEBI" id="CHEBI:15378"/>
        <dbReference type="ChEBI" id="CHEBI:43474"/>
        <dbReference type="ChEBI" id="CHEBI:57279"/>
        <dbReference type="ChEBI" id="CHEBI:57792"/>
        <dbReference type="ChEBI" id="CHEBI:58589"/>
        <dbReference type="EC" id="2.6.99.2"/>
    </reaction>
</comment>
<comment type="pathway">
    <text evidence="1">Cofactor biosynthesis; pyridoxine 5'-phosphate biosynthesis; pyridoxine 5'-phosphate from D-erythrose 4-phosphate: step 5/5.</text>
</comment>
<comment type="subunit">
    <text evidence="1">Homooctamer; tetramer of dimers.</text>
</comment>
<comment type="subcellular location">
    <subcellularLocation>
        <location evidence="1">Cytoplasm</location>
    </subcellularLocation>
</comment>
<comment type="similarity">
    <text evidence="1">Belongs to the PNP synthase family.</text>
</comment>
<evidence type="ECO:0000255" key="1">
    <source>
        <dbReference type="HAMAP-Rule" id="MF_00279"/>
    </source>
</evidence>
<feature type="chain" id="PRO_1000078818" description="Pyridoxine 5'-phosphate synthase">
    <location>
        <begin position="1"/>
        <end position="237"/>
    </location>
</feature>
<feature type="active site" description="Proton acceptor" evidence="1">
    <location>
        <position position="43"/>
    </location>
</feature>
<feature type="active site" description="Proton acceptor" evidence="1">
    <location>
        <position position="70"/>
    </location>
</feature>
<feature type="active site" description="Proton donor" evidence="1">
    <location>
        <position position="190"/>
    </location>
</feature>
<feature type="binding site" evidence="1">
    <location>
        <position position="7"/>
    </location>
    <ligand>
        <name>3-amino-2-oxopropyl phosphate</name>
        <dbReference type="ChEBI" id="CHEBI:57279"/>
    </ligand>
</feature>
<feature type="binding site" evidence="1">
    <location>
        <position position="18"/>
    </location>
    <ligand>
        <name>3-amino-2-oxopropyl phosphate</name>
        <dbReference type="ChEBI" id="CHEBI:57279"/>
    </ligand>
</feature>
<feature type="binding site" evidence="1">
    <location>
        <position position="45"/>
    </location>
    <ligand>
        <name>1-deoxy-D-xylulose 5-phosphate</name>
        <dbReference type="ChEBI" id="CHEBI:57792"/>
    </ligand>
</feature>
<feature type="binding site" evidence="1">
    <location>
        <position position="50"/>
    </location>
    <ligand>
        <name>1-deoxy-D-xylulose 5-phosphate</name>
        <dbReference type="ChEBI" id="CHEBI:57792"/>
    </ligand>
</feature>
<feature type="binding site" evidence="1">
    <location>
        <position position="100"/>
    </location>
    <ligand>
        <name>1-deoxy-D-xylulose 5-phosphate</name>
        <dbReference type="ChEBI" id="CHEBI:57792"/>
    </ligand>
</feature>
<feature type="binding site" evidence="1">
    <location>
        <position position="191"/>
    </location>
    <ligand>
        <name>3-amino-2-oxopropyl phosphate</name>
        <dbReference type="ChEBI" id="CHEBI:57279"/>
    </ligand>
</feature>
<feature type="binding site" evidence="1">
    <location>
        <begin position="213"/>
        <end position="214"/>
    </location>
    <ligand>
        <name>3-amino-2-oxopropyl phosphate</name>
        <dbReference type="ChEBI" id="CHEBI:57279"/>
    </ligand>
</feature>
<feature type="site" description="Transition state stabilizer" evidence="1">
    <location>
        <position position="151"/>
    </location>
</feature>
<dbReference type="EC" id="2.6.99.2" evidence="1"/>
<dbReference type="EMBL" id="CP000685">
    <property type="protein sequence ID" value="ABQ04727.1"/>
    <property type="molecule type" value="Genomic_DNA"/>
</dbReference>
<dbReference type="RefSeq" id="WP_012023771.1">
    <property type="nucleotide sequence ID" value="NC_009441.1"/>
</dbReference>
<dbReference type="SMR" id="A5FJ95"/>
<dbReference type="STRING" id="376686.Fjoh_1695"/>
<dbReference type="KEGG" id="fjo:Fjoh_1695"/>
<dbReference type="eggNOG" id="COG0854">
    <property type="taxonomic scope" value="Bacteria"/>
</dbReference>
<dbReference type="HOGENOM" id="CLU_074563_1_0_10"/>
<dbReference type="OrthoDB" id="9806590at2"/>
<dbReference type="UniPathway" id="UPA00244">
    <property type="reaction ID" value="UER00313"/>
</dbReference>
<dbReference type="Proteomes" id="UP000006694">
    <property type="component" value="Chromosome"/>
</dbReference>
<dbReference type="GO" id="GO:0005829">
    <property type="term" value="C:cytosol"/>
    <property type="evidence" value="ECO:0007669"/>
    <property type="project" value="TreeGrafter"/>
</dbReference>
<dbReference type="GO" id="GO:0033856">
    <property type="term" value="F:pyridoxine 5'-phosphate synthase activity"/>
    <property type="evidence" value="ECO:0007669"/>
    <property type="project" value="UniProtKB-EC"/>
</dbReference>
<dbReference type="GO" id="GO:0008615">
    <property type="term" value="P:pyridoxine biosynthetic process"/>
    <property type="evidence" value="ECO:0007669"/>
    <property type="project" value="UniProtKB-UniRule"/>
</dbReference>
<dbReference type="CDD" id="cd00003">
    <property type="entry name" value="PNPsynthase"/>
    <property type="match status" value="1"/>
</dbReference>
<dbReference type="FunFam" id="3.20.20.70:FF:000150">
    <property type="entry name" value="Pyridoxine 5'-phosphate synthase"/>
    <property type="match status" value="1"/>
</dbReference>
<dbReference type="Gene3D" id="3.20.20.70">
    <property type="entry name" value="Aldolase class I"/>
    <property type="match status" value="1"/>
</dbReference>
<dbReference type="HAMAP" id="MF_00279">
    <property type="entry name" value="PdxJ"/>
    <property type="match status" value="1"/>
</dbReference>
<dbReference type="InterPro" id="IPR013785">
    <property type="entry name" value="Aldolase_TIM"/>
</dbReference>
<dbReference type="InterPro" id="IPR004569">
    <property type="entry name" value="PyrdxlP_synth_PdxJ"/>
</dbReference>
<dbReference type="InterPro" id="IPR036130">
    <property type="entry name" value="Pyridoxine-5'_phos_synth"/>
</dbReference>
<dbReference type="NCBIfam" id="TIGR00559">
    <property type="entry name" value="pdxJ"/>
    <property type="match status" value="1"/>
</dbReference>
<dbReference type="NCBIfam" id="NF003625">
    <property type="entry name" value="PRK05265.1-3"/>
    <property type="match status" value="1"/>
</dbReference>
<dbReference type="NCBIfam" id="NF003626">
    <property type="entry name" value="PRK05265.1-4"/>
    <property type="match status" value="1"/>
</dbReference>
<dbReference type="PANTHER" id="PTHR30456">
    <property type="entry name" value="PYRIDOXINE 5'-PHOSPHATE SYNTHASE"/>
    <property type="match status" value="1"/>
</dbReference>
<dbReference type="PANTHER" id="PTHR30456:SF0">
    <property type="entry name" value="PYRIDOXINE 5'-PHOSPHATE SYNTHASE"/>
    <property type="match status" value="1"/>
</dbReference>
<dbReference type="Pfam" id="PF03740">
    <property type="entry name" value="PdxJ"/>
    <property type="match status" value="1"/>
</dbReference>
<dbReference type="SUPFAM" id="SSF63892">
    <property type="entry name" value="Pyridoxine 5'-phosphate synthase"/>
    <property type="match status" value="1"/>
</dbReference>
<accession>A5FJ95</accession>
<name>PDXJ_FLAJ1</name>
<sequence length="237" mass="26351">MTKLSVNINKIATLRNARGGNVPDLLKVAADIQRFGGQGITIHPRPDERHIRYQDARDLKAIVTTEYNIEGNPQHNFIDLVLECKPDQVTLVPDAIGAITSSAGWDTIKNQEYLKEVIQEFQRNGIRTSIFVDPVLEMIEGAKKTGTDRIELYTEAFAHQYDLGNKNGIDPYVKAAELANELGLGINAGHDLSLDNIQFFKQNIPGLLEVSIGHALISEALYLGLDNVVNMYLKKLK</sequence>
<gene>
    <name evidence="1" type="primary">pdxJ</name>
    <name type="ordered locus">Fjoh_1695</name>
</gene>
<keyword id="KW-0963">Cytoplasm</keyword>
<keyword id="KW-0664">Pyridoxine biosynthesis</keyword>
<keyword id="KW-0808">Transferase</keyword>
<proteinExistence type="inferred from homology"/>
<protein>
    <recommendedName>
        <fullName evidence="1">Pyridoxine 5'-phosphate synthase</fullName>
        <shortName evidence="1">PNP synthase</shortName>
        <ecNumber evidence="1">2.6.99.2</ecNumber>
    </recommendedName>
</protein>
<organism>
    <name type="scientific">Flavobacterium johnsoniae (strain ATCC 17061 / DSM 2064 / JCM 8514 / BCRC 14874 / CCUG 350202 / NBRC 14942 / NCIMB 11054 / UW101)</name>
    <name type="common">Cytophaga johnsonae</name>
    <dbReference type="NCBI Taxonomy" id="376686"/>
    <lineage>
        <taxon>Bacteria</taxon>
        <taxon>Pseudomonadati</taxon>
        <taxon>Bacteroidota</taxon>
        <taxon>Flavobacteriia</taxon>
        <taxon>Flavobacteriales</taxon>
        <taxon>Flavobacteriaceae</taxon>
        <taxon>Flavobacterium</taxon>
    </lineage>
</organism>
<reference key="1">
    <citation type="journal article" date="2009" name="Appl. Environ. Microbiol.">
        <title>Novel features of the polysaccharide-digesting gliding bacterium Flavobacterium johnsoniae as revealed by genome sequence analysis.</title>
        <authorList>
            <person name="McBride M.J."/>
            <person name="Xie G."/>
            <person name="Martens E.C."/>
            <person name="Lapidus A."/>
            <person name="Henrissat B."/>
            <person name="Rhodes R.G."/>
            <person name="Goltsman E."/>
            <person name="Wang W."/>
            <person name="Xu J."/>
            <person name="Hunnicutt D.W."/>
            <person name="Staroscik A.M."/>
            <person name="Hoover T.R."/>
            <person name="Cheng Y.Q."/>
            <person name="Stein J.L."/>
        </authorList>
    </citation>
    <scope>NUCLEOTIDE SEQUENCE [LARGE SCALE GENOMIC DNA]</scope>
    <source>
        <strain>ATCC 17061 / DSM 2064 / JCM 8514 / BCRC 14874 / CCUG 350202 / NBRC 14942 / NCIMB 11054 / UW101</strain>
    </source>
</reference>